<feature type="chain" id="PRO_0000150466" description="Olfactory receptor 2C3">
    <location>
        <begin position="1"/>
        <end position="320"/>
    </location>
</feature>
<feature type="topological domain" description="Extracellular" evidence="1">
    <location>
        <begin position="1"/>
        <end position="26"/>
    </location>
</feature>
<feature type="transmembrane region" description="Helical; Name=1" evidence="1">
    <location>
        <begin position="27"/>
        <end position="50"/>
    </location>
</feature>
<feature type="topological domain" description="Cytoplasmic" evidence="1">
    <location>
        <begin position="51"/>
        <end position="58"/>
    </location>
</feature>
<feature type="transmembrane region" description="Helical; Name=2" evidence="1">
    <location>
        <begin position="59"/>
        <end position="80"/>
    </location>
</feature>
<feature type="topological domain" description="Extracellular" evidence="1">
    <location>
        <begin position="81"/>
        <end position="101"/>
    </location>
</feature>
<feature type="transmembrane region" description="Helical; Name=3" evidence="1">
    <location>
        <begin position="102"/>
        <end position="121"/>
    </location>
</feature>
<feature type="topological domain" description="Cytoplasmic" evidence="1">
    <location>
        <begin position="122"/>
        <end position="140"/>
    </location>
</feature>
<feature type="transmembrane region" description="Helical; Name=4" evidence="1">
    <location>
        <begin position="141"/>
        <end position="159"/>
    </location>
</feature>
<feature type="topological domain" description="Extracellular" evidence="1">
    <location>
        <begin position="160"/>
        <end position="196"/>
    </location>
</feature>
<feature type="transmembrane region" description="Helical; Name=5" evidence="1">
    <location>
        <begin position="197"/>
        <end position="220"/>
    </location>
</feature>
<feature type="topological domain" description="Cytoplasmic" evidence="1">
    <location>
        <begin position="221"/>
        <end position="237"/>
    </location>
</feature>
<feature type="transmembrane region" description="Helical; Name=6" evidence="1">
    <location>
        <begin position="238"/>
        <end position="260"/>
    </location>
</feature>
<feature type="topological domain" description="Extracellular" evidence="1">
    <location>
        <begin position="261"/>
        <end position="273"/>
    </location>
</feature>
<feature type="transmembrane region" description="Helical; Name=7" evidence="1">
    <location>
        <begin position="274"/>
        <end position="293"/>
    </location>
</feature>
<feature type="topological domain" description="Cytoplasmic" evidence="1">
    <location>
        <begin position="294"/>
        <end position="320"/>
    </location>
</feature>
<feature type="glycosylation site" description="N-linked (GlcNAc...) asparagine" evidence="1">
    <location>
        <position position="6"/>
    </location>
</feature>
<feature type="disulfide bond" evidence="2">
    <location>
        <begin position="98"/>
        <end position="190"/>
    </location>
</feature>
<feature type="sequence variant" id="VAR_025540" description="In dbSNP:rs6697472." evidence="3">
    <original>T</original>
    <variation>A</variation>
    <location>
        <position position="20"/>
    </location>
</feature>
<feature type="sequence variant" id="VAR_025541" description="In dbSNP:rs6657127." evidence="3">
    <original>P</original>
    <variation>S</variation>
    <location>
        <position position="68"/>
    </location>
</feature>
<feature type="sequence variant" id="VAR_046378" description="In dbSNP:rs34220133.">
    <original>R</original>
    <variation>S</variation>
    <location>
        <position position="129"/>
    </location>
</feature>
<feature type="sequence variant" id="VAR_062016" description="In dbSNP:rs6702693.">
    <original>L</original>
    <variation>V</variation>
    <location>
        <position position="289"/>
    </location>
</feature>
<evidence type="ECO:0000255" key="1"/>
<evidence type="ECO:0000255" key="2">
    <source>
        <dbReference type="PROSITE-ProRule" id="PRU00521"/>
    </source>
</evidence>
<evidence type="ECO:0000269" key="3">
    <source>
    </source>
</evidence>
<evidence type="ECO:0000305" key="4"/>
<dbReference type="EMBL" id="AB065649">
    <property type="protein sequence ID" value="BAC05875.1"/>
    <property type="molecule type" value="Genomic_DNA"/>
</dbReference>
<dbReference type="EMBL" id="AL606804">
    <property type="status" value="NOT_ANNOTATED_CDS"/>
    <property type="molecule type" value="Genomic_DNA"/>
</dbReference>
<dbReference type="EMBL" id="BC030717">
    <property type="protein sequence ID" value="AAH30717.1"/>
    <property type="status" value="ALT_INIT"/>
    <property type="molecule type" value="mRNA"/>
</dbReference>
<dbReference type="EMBL" id="BK004471">
    <property type="protein sequence ID" value="DAA04869.1"/>
    <property type="status" value="ALT_INIT"/>
    <property type="molecule type" value="Genomic_DNA"/>
</dbReference>
<dbReference type="CCDS" id="CCDS1634.2"/>
<dbReference type="RefSeq" id="NP_932340.3">
    <property type="nucleotide sequence ID" value="NM_198074.4"/>
</dbReference>
<dbReference type="SMR" id="Q8N628"/>
<dbReference type="FunCoup" id="Q8N628">
    <property type="interactions" value="461"/>
</dbReference>
<dbReference type="STRING" id="9606.ENSP00000479757"/>
<dbReference type="GlyCosmos" id="Q8N628">
    <property type="glycosylation" value="1 site, No reported glycans"/>
</dbReference>
<dbReference type="GlyGen" id="Q8N628">
    <property type="glycosylation" value="2 sites"/>
</dbReference>
<dbReference type="iPTMnet" id="Q8N628"/>
<dbReference type="BioMuta" id="OR2C3"/>
<dbReference type="DMDM" id="218512126"/>
<dbReference type="PaxDb" id="9606-ENSP00000355443"/>
<dbReference type="PeptideAtlas" id="Q8N628"/>
<dbReference type="Antibodypedia" id="34728">
    <property type="antibodies" value="110 antibodies from 23 providers"/>
</dbReference>
<dbReference type="DNASU" id="81472"/>
<dbReference type="Ensembl" id="ENST00000366487.4">
    <property type="protein sequence ID" value="ENSP00000355443.3"/>
    <property type="gene ID" value="ENSG00000196242.10"/>
</dbReference>
<dbReference type="Ensembl" id="ENST00000641802.1">
    <property type="protein sequence ID" value="ENSP00000493385.1"/>
    <property type="gene ID" value="ENSG00000196242.10"/>
</dbReference>
<dbReference type="GeneID" id="81472"/>
<dbReference type="KEGG" id="hsa:81472"/>
<dbReference type="MANE-Select" id="ENST00000641802.1">
    <property type="protein sequence ID" value="ENSP00000493385.1"/>
    <property type="RefSeq nucleotide sequence ID" value="NM_198074.6"/>
    <property type="RefSeq protein sequence ID" value="NP_932340.4"/>
</dbReference>
<dbReference type="UCSC" id="uc009xgy.3">
    <property type="organism name" value="human"/>
</dbReference>
<dbReference type="AGR" id="HGNC:15005"/>
<dbReference type="CTD" id="81472"/>
<dbReference type="GeneCards" id="OR2C3"/>
<dbReference type="HGNC" id="HGNC:15005">
    <property type="gene designation" value="OR2C3"/>
</dbReference>
<dbReference type="HPA" id="ENSG00000196242">
    <property type="expression patterns" value="Not detected"/>
</dbReference>
<dbReference type="neXtProt" id="NX_Q8N628"/>
<dbReference type="PharmGKB" id="PA32149"/>
<dbReference type="VEuPathDB" id="HostDB:ENSG00000196242"/>
<dbReference type="eggNOG" id="ENOG502RU2D">
    <property type="taxonomic scope" value="Eukaryota"/>
</dbReference>
<dbReference type="GeneTree" id="ENSGT01130000278264"/>
<dbReference type="HOGENOM" id="CLU_012526_1_2_1"/>
<dbReference type="InParanoid" id="Q8N628"/>
<dbReference type="OMA" id="HMDVHLH"/>
<dbReference type="OrthoDB" id="9975554at2759"/>
<dbReference type="PAN-GO" id="Q8N628">
    <property type="GO annotations" value="0 GO annotations based on evolutionary models"/>
</dbReference>
<dbReference type="PhylomeDB" id="Q8N628"/>
<dbReference type="TreeFam" id="TF336512"/>
<dbReference type="PathwayCommons" id="Q8N628"/>
<dbReference type="Reactome" id="R-HSA-9752946">
    <property type="pathway name" value="Expression and translocation of olfactory receptors"/>
</dbReference>
<dbReference type="BioGRID-ORCS" id="81472">
    <property type="hits" value="13 hits in 751 CRISPR screens"/>
</dbReference>
<dbReference type="GeneWiki" id="OR2C3"/>
<dbReference type="GenomeRNAi" id="81472"/>
<dbReference type="Pharos" id="Q8N628">
    <property type="development level" value="Tdark"/>
</dbReference>
<dbReference type="PRO" id="PR:Q8N628"/>
<dbReference type="Proteomes" id="UP000005640">
    <property type="component" value="Chromosome 1"/>
</dbReference>
<dbReference type="RNAct" id="Q8N628">
    <property type="molecule type" value="protein"/>
</dbReference>
<dbReference type="Bgee" id="ENSG00000196242">
    <property type="expression patterns" value="Expressed in primordial germ cell in gonad and 45 other cell types or tissues"/>
</dbReference>
<dbReference type="GO" id="GO:0005886">
    <property type="term" value="C:plasma membrane"/>
    <property type="evidence" value="ECO:0000314"/>
    <property type="project" value="HPA"/>
</dbReference>
<dbReference type="GO" id="GO:0004930">
    <property type="term" value="F:G protein-coupled receptor activity"/>
    <property type="evidence" value="ECO:0007669"/>
    <property type="project" value="UniProtKB-KW"/>
</dbReference>
<dbReference type="GO" id="GO:0004984">
    <property type="term" value="F:olfactory receptor activity"/>
    <property type="evidence" value="ECO:0000318"/>
    <property type="project" value="GO_Central"/>
</dbReference>
<dbReference type="GO" id="GO:0050911">
    <property type="term" value="P:detection of chemical stimulus involved in sensory perception of smell"/>
    <property type="evidence" value="ECO:0000318"/>
    <property type="project" value="GO_Central"/>
</dbReference>
<dbReference type="CDD" id="cd15947">
    <property type="entry name" value="7tmA_OR2B-like"/>
    <property type="match status" value="1"/>
</dbReference>
<dbReference type="FunFam" id="1.10.1220.70:FF:000001">
    <property type="entry name" value="Olfactory receptor"/>
    <property type="match status" value="1"/>
</dbReference>
<dbReference type="FunFam" id="1.20.1070.10:FF:000005">
    <property type="entry name" value="Olfactory receptor"/>
    <property type="match status" value="1"/>
</dbReference>
<dbReference type="Gene3D" id="1.20.1070.10">
    <property type="entry name" value="Rhodopsin 7-helix transmembrane proteins"/>
    <property type="match status" value="1"/>
</dbReference>
<dbReference type="InterPro" id="IPR000276">
    <property type="entry name" value="GPCR_Rhodpsn"/>
</dbReference>
<dbReference type="InterPro" id="IPR017452">
    <property type="entry name" value="GPCR_Rhodpsn_7TM"/>
</dbReference>
<dbReference type="InterPro" id="IPR000725">
    <property type="entry name" value="Olfact_rcpt"/>
</dbReference>
<dbReference type="PANTHER" id="PTHR26453">
    <property type="entry name" value="OLFACTORY RECEPTOR"/>
    <property type="match status" value="1"/>
</dbReference>
<dbReference type="Pfam" id="PF13853">
    <property type="entry name" value="7tm_4"/>
    <property type="match status" value="1"/>
</dbReference>
<dbReference type="PRINTS" id="PR00237">
    <property type="entry name" value="GPCRRHODOPSN"/>
</dbReference>
<dbReference type="PRINTS" id="PR00245">
    <property type="entry name" value="OLFACTORYR"/>
</dbReference>
<dbReference type="SUPFAM" id="SSF81321">
    <property type="entry name" value="Family A G protein-coupled receptor-like"/>
    <property type="match status" value="1"/>
</dbReference>
<dbReference type="PROSITE" id="PS00237">
    <property type="entry name" value="G_PROTEIN_RECEP_F1_1"/>
    <property type="match status" value="1"/>
</dbReference>
<dbReference type="PROSITE" id="PS50262">
    <property type="entry name" value="G_PROTEIN_RECEP_F1_2"/>
    <property type="match status" value="1"/>
</dbReference>
<gene>
    <name type="primary">OR2C3</name>
    <name type="synonym">OR2C4</name>
    <name type="synonym">OR2C5P</name>
</gene>
<reference key="1">
    <citation type="submission" date="2001-07" db="EMBL/GenBank/DDBJ databases">
        <title>Genome-wide discovery and analysis of human seven transmembrane helix receptor genes.</title>
        <authorList>
            <person name="Suwa M."/>
            <person name="Sato T."/>
            <person name="Okouchi I."/>
            <person name="Arita M."/>
            <person name="Futami K."/>
            <person name="Matsumoto S."/>
            <person name="Tsutsumi S."/>
            <person name="Aburatani H."/>
            <person name="Asai K."/>
            <person name="Akiyama Y."/>
        </authorList>
    </citation>
    <scope>NUCLEOTIDE SEQUENCE [GENOMIC DNA]</scope>
</reference>
<reference key="2">
    <citation type="journal article" date="2006" name="Nature">
        <title>The DNA sequence and biological annotation of human chromosome 1.</title>
        <authorList>
            <person name="Gregory S.G."/>
            <person name="Barlow K.F."/>
            <person name="McLay K.E."/>
            <person name="Kaul R."/>
            <person name="Swarbreck D."/>
            <person name="Dunham A."/>
            <person name="Scott C.E."/>
            <person name="Howe K.L."/>
            <person name="Woodfine K."/>
            <person name="Spencer C.C.A."/>
            <person name="Jones M.C."/>
            <person name="Gillson C."/>
            <person name="Searle S."/>
            <person name="Zhou Y."/>
            <person name="Kokocinski F."/>
            <person name="McDonald L."/>
            <person name="Evans R."/>
            <person name="Phillips K."/>
            <person name="Atkinson A."/>
            <person name="Cooper R."/>
            <person name="Jones C."/>
            <person name="Hall R.E."/>
            <person name="Andrews T.D."/>
            <person name="Lloyd C."/>
            <person name="Ainscough R."/>
            <person name="Almeida J.P."/>
            <person name="Ambrose K.D."/>
            <person name="Anderson F."/>
            <person name="Andrew R.W."/>
            <person name="Ashwell R.I.S."/>
            <person name="Aubin K."/>
            <person name="Babbage A.K."/>
            <person name="Bagguley C.L."/>
            <person name="Bailey J."/>
            <person name="Beasley H."/>
            <person name="Bethel G."/>
            <person name="Bird C.P."/>
            <person name="Bray-Allen S."/>
            <person name="Brown J.Y."/>
            <person name="Brown A.J."/>
            <person name="Buckley D."/>
            <person name="Burton J."/>
            <person name="Bye J."/>
            <person name="Carder C."/>
            <person name="Chapman J.C."/>
            <person name="Clark S.Y."/>
            <person name="Clarke G."/>
            <person name="Clee C."/>
            <person name="Cobley V."/>
            <person name="Collier R.E."/>
            <person name="Corby N."/>
            <person name="Coville G.J."/>
            <person name="Davies J."/>
            <person name="Deadman R."/>
            <person name="Dunn M."/>
            <person name="Earthrowl M."/>
            <person name="Ellington A.G."/>
            <person name="Errington H."/>
            <person name="Frankish A."/>
            <person name="Frankland J."/>
            <person name="French L."/>
            <person name="Garner P."/>
            <person name="Garnett J."/>
            <person name="Gay L."/>
            <person name="Ghori M.R.J."/>
            <person name="Gibson R."/>
            <person name="Gilby L.M."/>
            <person name="Gillett W."/>
            <person name="Glithero R.J."/>
            <person name="Grafham D.V."/>
            <person name="Griffiths C."/>
            <person name="Griffiths-Jones S."/>
            <person name="Grocock R."/>
            <person name="Hammond S."/>
            <person name="Harrison E.S.I."/>
            <person name="Hart E."/>
            <person name="Haugen E."/>
            <person name="Heath P.D."/>
            <person name="Holmes S."/>
            <person name="Holt K."/>
            <person name="Howden P.J."/>
            <person name="Hunt A.R."/>
            <person name="Hunt S.E."/>
            <person name="Hunter G."/>
            <person name="Isherwood J."/>
            <person name="James R."/>
            <person name="Johnson C."/>
            <person name="Johnson D."/>
            <person name="Joy A."/>
            <person name="Kay M."/>
            <person name="Kershaw J.K."/>
            <person name="Kibukawa M."/>
            <person name="Kimberley A.M."/>
            <person name="King A."/>
            <person name="Knights A.J."/>
            <person name="Lad H."/>
            <person name="Laird G."/>
            <person name="Lawlor S."/>
            <person name="Leongamornlert D.A."/>
            <person name="Lloyd D.M."/>
            <person name="Loveland J."/>
            <person name="Lovell J."/>
            <person name="Lush M.J."/>
            <person name="Lyne R."/>
            <person name="Martin S."/>
            <person name="Mashreghi-Mohammadi M."/>
            <person name="Matthews L."/>
            <person name="Matthews N.S.W."/>
            <person name="McLaren S."/>
            <person name="Milne S."/>
            <person name="Mistry S."/>
            <person name="Moore M.J.F."/>
            <person name="Nickerson T."/>
            <person name="O'Dell C.N."/>
            <person name="Oliver K."/>
            <person name="Palmeiri A."/>
            <person name="Palmer S.A."/>
            <person name="Parker A."/>
            <person name="Patel D."/>
            <person name="Pearce A.V."/>
            <person name="Peck A.I."/>
            <person name="Pelan S."/>
            <person name="Phelps K."/>
            <person name="Phillimore B.J."/>
            <person name="Plumb R."/>
            <person name="Rajan J."/>
            <person name="Raymond C."/>
            <person name="Rouse G."/>
            <person name="Saenphimmachak C."/>
            <person name="Sehra H.K."/>
            <person name="Sheridan E."/>
            <person name="Shownkeen R."/>
            <person name="Sims S."/>
            <person name="Skuce C.D."/>
            <person name="Smith M."/>
            <person name="Steward C."/>
            <person name="Subramanian S."/>
            <person name="Sycamore N."/>
            <person name="Tracey A."/>
            <person name="Tromans A."/>
            <person name="Van Helmond Z."/>
            <person name="Wall M."/>
            <person name="Wallis J.M."/>
            <person name="White S."/>
            <person name="Whitehead S.L."/>
            <person name="Wilkinson J.E."/>
            <person name="Willey D.L."/>
            <person name="Williams H."/>
            <person name="Wilming L."/>
            <person name="Wray P.W."/>
            <person name="Wu Z."/>
            <person name="Coulson A."/>
            <person name="Vaudin M."/>
            <person name="Sulston J.E."/>
            <person name="Durbin R.M."/>
            <person name="Hubbard T."/>
            <person name="Wooster R."/>
            <person name="Dunham I."/>
            <person name="Carter N.P."/>
            <person name="McVean G."/>
            <person name="Ross M.T."/>
            <person name="Harrow J."/>
            <person name="Olson M.V."/>
            <person name="Beck S."/>
            <person name="Rogers J."/>
            <person name="Bentley D.R."/>
        </authorList>
    </citation>
    <scope>NUCLEOTIDE SEQUENCE [LARGE SCALE GENOMIC DNA]</scope>
</reference>
<reference key="3">
    <citation type="journal article" date="2004" name="Genome Res.">
        <title>The status, quality, and expansion of the NIH full-length cDNA project: the Mammalian Gene Collection (MGC).</title>
        <authorList>
            <consortium name="The MGC Project Team"/>
        </authorList>
    </citation>
    <scope>NUCLEOTIDE SEQUENCE [LARGE SCALE MRNA]</scope>
    <scope>VARIANTS ALA-20 AND SER-68</scope>
    <source>
        <tissue>Melanoma</tissue>
    </source>
</reference>
<reference key="4">
    <citation type="journal article" date="2004" name="Proc. Natl. Acad. Sci. U.S.A.">
        <title>The human olfactory receptor gene family.</title>
        <authorList>
            <person name="Malnic B."/>
            <person name="Godfrey P.A."/>
            <person name="Buck L.B."/>
        </authorList>
    </citation>
    <scope>IDENTIFICATION</scope>
</reference>
<reference key="5">
    <citation type="journal article" date="2004" name="Proc. Natl. Acad. Sci. U.S.A.">
        <authorList>
            <person name="Malnic B."/>
            <person name="Godfrey P.A."/>
            <person name="Buck L.B."/>
        </authorList>
    </citation>
    <scope>ERRATUM OF PUBMED:14983052</scope>
</reference>
<keyword id="KW-1003">Cell membrane</keyword>
<keyword id="KW-1015">Disulfide bond</keyword>
<keyword id="KW-0297">G-protein coupled receptor</keyword>
<keyword id="KW-0325">Glycoprotein</keyword>
<keyword id="KW-0472">Membrane</keyword>
<keyword id="KW-0552">Olfaction</keyword>
<keyword id="KW-0675">Receptor</keyword>
<keyword id="KW-1185">Reference proteome</keyword>
<keyword id="KW-0716">Sensory transduction</keyword>
<keyword id="KW-0807">Transducer</keyword>
<keyword id="KW-0812">Transmembrane</keyword>
<keyword id="KW-1133">Transmembrane helix</keyword>
<organism>
    <name type="scientific">Homo sapiens</name>
    <name type="common">Human</name>
    <dbReference type="NCBI Taxonomy" id="9606"/>
    <lineage>
        <taxon>Eukaryota</taxon>
        <taxon>Metazoa</taxon>
        <taxon>Chordata</taxon>
        <taxon>Craniata</taxon>
        <taxon>Vertebrata</taxon>
        <taxon>Euteleostomi</taxon>
        <taxon>Mammalia</taxon>
        <taxon>Eutheria</taxon>
        <taxon>Euarchontoglires</taxon>
        <taxon>Primates</taxon>
        <taxon>Haplorrhini</taxon>
        <taxon>Catarrhini</taxon>
        <taxon>Hominidae</taxon>
        <taxon>Homo</taxon>
    </lineage>
</organism>
<sequence>MMEIANVSSPEVFVLLGFSTRPSLETVLFIVVLSFYMVSILGNGIIILVSHTDVHLHTPMYFFLANLPFLDMSFTTSIVPQLLANLWGPQKTISYGGCVVQFYISHWLGATECVLLATMSYDRYAAICRPLHYTVIMHPQLCLGLALASWLGGLTTSMVGSTLTMLLPLCGNNCIDHFFCEMPLIMQLACVDTSLNEMEMYLASFVFVVLPLGLILVSYGHIARAVLKIRSAEGRRKAFNTCSSHVAVVSLFYGSIIFMYLQPAKSTSHEQGKFIALFYTVVTPALNPLIYTLRNTEVKSALRHMVLENCCGSAGKLAQI</sequence>
<name>OR2C3_HUMAN</name>
<comment type="function">
    <text evidence="4">Odorant receptor.</text>
</comment>
<comment type="subcellular location">
    <subcellularLocation>
        <location>Cell membrane</location>
        <topology>Multi-pass membrane protein</topology>
    </subcellularLocation>
</comment>
<comment type="similarity">
    <text evidence="2">Belongs to the G-protein coupled receptor 1 family.</text>
</comment>
<comment type="caution">
    <text evidence="4">It is uncertain whether Met-1 or Met-2 is the initiator.</text>
</comment>
<comment type="sequence caution" evidence="4">
    <conflict type="erroneous initiation">
        <sequence resource="EMBL-CDS" id="AAH30717"/>
    </conflict>
</comment>
<comment type="sequence caution" evidence="4">
    <conflict type="erroneous initiation">
        <sequence resource="EMBL-CDS" id="DAA04869"/>
    </conflict>
</comment>
<comment type="online information" name="Human Olfactory Receptor Data Exploratorium (HORDE)">
    <link uri="http://genome.weizmann.ac.il/horde/card/index/symbol:OR2C3"/>
</comment>
<protein>
    <recommendedName>
        <fullName>Olfactory receptor 2C3</fullName>
    </recommendedName>
    <alternativeName>
        <fullName>Olfactory receptor 2C4</fullName>
    </alternativeName>
    <alternativeName>
        <fullName>Olfactory receptor 2C5</fullName>
    </alternativeName>
    <alternativeName>
        <fullName>Olfactory receptor OR1-30</fullName>
    </alternativeName>
</protein>
<accession>Q8N628</accession>
<accession>Q5JQS4</accession>
<accession>Q6IEZ1</accession>
<accession>Q8NGW7</accession>
<proteinExistence type="evidence at transcript level"/>